<sequence>MESLKEMRKAQMSEGPAAILAIGTATPNNVYMQADYPDYYFRMTKSEHMTELKDKFRTLCEKSMIRKRHMCFSEEFLKANPEVSKHMGKSLNARQDIAVVETPRLGNEAAVKAIKEWGQPKSSITHLIFCSSAGVDMPGADYQLTRILGLNPSVKRMMVYQQGCYAGGTVLRLAKDLAENNKGSRVLVVCSELTAPTFRGPSPDAVDSLVGQALFADGAAALVVGADPDSSIERALYYLVSASQMLLPDSDGAIEGHIREEGLTVHLKKDVPALFSANIDTPLVEAFKPLGISDWNSIFWIAHPGGPAILDQIEEKLGLKEDKLRASKHVMSEYGNMSSSCVLFVLDEMRSRSLQDGKSTTGEGLDWGVLFGFGPGLTVETVVLRSVPIEA</sequence>
<proteinExistence type="evidence at transcript level"/>
<accession>Q9FSC1</accession>
<protein>
    <recommendedName>
        <fullName>Probable acridone synthase 4</fullName>
        <ecNumber>2.3.1.159</ecNumber>
    </recommendedName>
    <alternativeName>
        <fullName>Acridone synthase IV</fullName>
    </alternativeName>
</protein>
<evidence type="ECO:0000255" key="1">
    <source>
        <dbReference type="PROSITE-ProRule" id="PRU10023"/>
    </source>
</evidence>
<evidence type="ECO:0000305" key="2"/>
<gene>
    <name type="primary">ACS4</name>
</gene>
<reference key="1">
    <citation type="submission" date="2000-10" db="EMBL/GenBank/DDBJ databases">
        <authorList>
            <person name="Springob K."/>
            <person name="Matern U."/>
        </authorList>
    </citation>
    <scope>NUCLEOTIDE SEQUENCE [MRNA]</scope>
    <source>
        <tissue>Immature flower</tissue>
    </source>
</reference>
<feature type="chain" id="PRO_0000216089" description="Probable acridone synthase 4">
    <location>
        <begin position="1"/>
        <end position="391"/>
    </location>
</feature>
<feature type="active site" evidence="1">
    <location>
        <position position="164"/>
    </location>
</feature>
<organism>
    <name type="scientific">Ruta graveolens</name>
    <name type="common">Common rue</name>
    <dbReference type="NCBI Taxonomy" id="37565"/>
    <lineage>
        <taxon>Eukaryota</taxon>
        <taxon>Viridiplantae</taxon>
        <taxon>Streptophyta</taxon>
        <taxon>Embryophyta</taxon>
        <taxon>Tracheophyta</taxon>
        <taxon>Spermatophyta</taxon>
        <taxon>Magnoliopsida</taxon>
        <taxon>eudicotyledons</taxon>
        <taxon>Gunneridae</taxon>
        <taxon>Pentapetalae</taxon>
        <taxon>rosids</taxon>
        <taxon>malvids</taxon>
        <taxon>Sapindales</taxon>
        <taxon>Rutaceae</taxon>
        <taxon>Rutoideae</taxon>
        <taxon>Ruta</taxon>
    </lineage>
</organism>
<comment type="catalytic activity">
    <reaction>
        <text>N-methylanthraniloyl-CoA + 3 malonyl-CoA + 3 H(+) = 1,3-dihydroxy-N-methylacridone + 3 CO2 + 4 CoA + H2O</text>
        <dbReference type="Rhea" id="RHEA:22224"/>
        <dbReference type="ChEBI" id="CHEBI:15377"/>
        <dbReference type="ChEBI" id="CHEBI:15378"/>
        <dbReference type="ChEBI" id="CHEBI:16526"/>
        <dbReference type="ChEBI" id="CHEBI:30306"/>
        <dbReference type="ChEBI" id="CHEBI:57287"/>
        <dbReference type="ChEBI" id="CHEBI:57384"/>
        <dbReference type="ChEBI" id="CHEBI:58630"/>
        <dbReference type="EC" id="2.3.1.159"/>
    </reaction>
</comment>
<comment type="similarity">
    <text evidence="2">Belongs to the thiolase-like superfamily. Chalcone/stilbene synthases family.</text>
</comment>
<keyword id="KW-0012">Acyltransferase</keyword>
<keyword id="KW-0284">Flavonoid biosynthesis</keyword>
<keyword id="KW-0808">Transferase</keyword>
<dbReference type="EC" id="2.3.1.159"/>
<dbReference type="EMBL" id="AJ297787">
    <property type="protein sequence ID" value="CAC14057.1"/>
    <property type="molecule type" value="mRNA"/>
</dbReference>
<dbReference type="SMR" id="Q9FSC1"/>
<dbReference type="GO" id="GO:0050635">
    <property type="term" value="F:acridone synthase activity"/>
    <property type="evidence" value="ECO:0007669"/>
    <property type="project" value="UniProtKB-EC"/>
</dbReference>
<dbReference type="GO" id="GO:0009813">
    <property type="term" value="P:flavonoid biosynthetic process"/>
    <property type="evidence" value="ECO:0007669"/>
    <property type="project" value="UniProtKB-KW"/>
</dbReference>
<dbReference type="GO" id="GO:0030639">
    <property type="term" value="P:polyketide biosynthetic process"/>
    <property type="evidence" value="ECO:0007669"/>
    <property type="project" value="TreeGrafter"/>
</dbReference>
<dbReference type="CDD" id="cd00831">
    <property type="entry name" value="CHS_like"/>
    <property type="match status" value="1"/>
</dbReference>
<dbReference type="FunFam" id="3.40.47.10:FF:000014">
    <property type="entry name" value="Chalcone synthase 1"/>
    <property type="match status" value="1"/>
</dbReference>
<dbReference type="FunFam" id="3.40.47.10:FF:000025">
    <property type="entry name" value="Chalcone synthase 2"/>
    <property type="match status" value="1"/>
</dbReference>
<dbReference type="Gene3D" id="3.40.47.10">
    <property type="match status" value="2"/>
</dbReference>
<dbReference type="InterPro" id="IPR012328">
    <property type="entry name" value="Chalcone/stilbene_synt_C"/>
</dbReference>
<dbReference type="InterPro" id="IPR001099">
    <property type="entry name" value="Chalcone/stilbene_synt_N"/>
</dbReference>
<dbReference type="InterPro" id="IPR018088">
    <property type="entry name" value="Chalcone/stilbene_synthase_AS"/>
</dbReference>
<dbReference type="InterPro" id="IPR011141">
    <property type="entry name" value="Polyketide_synthase_type-III"/>
</dbReference>
<dbReference type="InterPro" id="IPR016039">
    <property type="entry name" value="Thiolase-like"/>
</dbReference>
<dbReference type="PANTHER" id="PTHR11877:SF14">
    <property type="entry name" value="CHALCONE SYNTHASE"/>
    <property type="match status" value="1"/>
</dbReference>
<dbReference type="PANTHER" id="PTHR11877">
    <property type="entry name" value="HYDROXYMETHYLGLUTARYL-COA SYNTHASE"/>
    <property type="match status" value="1"/>
</dbReference>
<dbReference type="Pfam" id="PF02797">
    <property type="entry name" value="Chal_sti_synt_C"/>
    <property type="match status" value="1"/>
</dbReference>
<dbReference type="Pfam" id="PF00195">
    <property type="entry name" value="Chal_sti_synt_N"/>
    <property type="match status" value="1"/>
</dbReference>
<dbReference type="PIRSF" id="PIRSF000451">
    <property type="entry name" value="PKS_III"/>
    <property type="match status" value="1"/>
</dbReference>
<dbReference type="SUPFAM" id="SSF53901">
    <property type="entry name" value="Thiolase-like"/>
    <property type="match status" value="2"/>
</dbReference>
<dbReference type="PROSITE" id="PS00441">
    <property type="entry name" value="CHALCONE_SYNTH"/>
    <property type="match status" value="1"/>
</dbReference>
<name>ACS4_RUTGR</name>